<protein>
    <recommendedName>
        <fullName evidence="7 8">Hainantoxin-III 12</fullName>
        <shortName evidence="7 8">HnTx-III.12</shortName>
    </recommendedName>
    <alternativeName>
        <fullName>Hainantoxin-3.12</fullName>
    </alternativeName>
    <alternativeName>
        <fullName>Mu-theraphotoxin-Hhn2a</fullName>
        <shortName>Mu-TRTX-Hhn2a</shortName>
    </alternativeName>
    <alternativeName>
        <fullName>Peptide F7-18.76</fullName>
    </alternativeName>
</protein>
<evidence type="ECO:0000255" key="1"/>
<evidence type="ECO:0000269" key="2">
    <source>
    </source>
</evidence>
<evidence type="ECO:0000269" key="3">
    <source>
    </source>
</evidence>
<evidence type="ECO:0000269" key="4">
    <source>
    </source>
</evidence>
<evidence type="ECO:0000269" key="5">
    <source ref="3"/>
</evidence>
<evidence type="ECO:0000269" key="6">
    <source ref="5"/>
</evidence>
<evidence type="ECO:0000303" key="7">
    <source>
    </source>
</evidence>
<evidence type="ECO:0000303" key="8">
    <source ref="5"/>
</evidence>
<evidence type="ECO:0000305" key="9"/>
<evidence type="ECO:0000305" key="10">
    <source>
    </source>
</evidence>
<evidence type="ECO:0000305" key="11">
    <source>
    </source>
</evidence>
<name>H3A12_CYRHA</name>
<sequence length="83" mass="9123">MKASMFLALAGLVLLFVVGYASGSEEKEFPRELLSKIFAVDDFKGEERGCKGFGDSCTPGKNECCPNYACSSKHKWCKVYLGK</sequence>
<reference key="1">
    <citation type="journal article" date="2010" name="J. Proteome Res.">
        <title>Molecular diversification of peptide toxins from the tarantula Haplopelma hainanum (Ornithoctonus hainana) venom based on transcriptomic, peptidomic, and genomic analyses.</title>
        <authorList>
            <person name="Tang X."/>
            <person name="Zhang Y."/>
            <person name="Hu W."/>
            <person name="Xu D."/>
            <person name="Tao H."/>
            <person name="Yang X."/>
            <person name="Li Y."/>
            <person name="Jiang L."/>
            <person name="Liang S."/>
        </authorList>
    </citation>
    <scope>NUCLEOTIDE SEQUENCE [LARGE SCALE GENOMIC DNA / MRNA]</scope>
    <scope>PROTEIN SEQUENCE OF 49-81</scope>
    <scope>IDENTIFICATION BY MASS SPECTROMETRY</scope>
    <source>
        <tissue>Venom</tissue>
        <tissue>Venom gland</tissue>
    </source>
</reference>
<reference key="2">
    <citation type="journal article" date="2003" name="Eur. J. Pharmacol.">
        <title>Inhibition of neuronal tetrodotoxin-sensitive Na+ channels by two spider toxins: hainantoxin-III and hainantoxin-IV.</title>
        <authorList>
            <person name="Xiao Y."/>
            <person name="Liang S."/>
        </authorList>
    </citation>
    <scope>PROTEIN SEQUENCE OF 49-81</scope>
    <scope>FUNCTION</scope>
    <scope>SUBCELLULAR LOCATION</scope>
    <scope>AMIDATION AT LEU-81</scope>
    <source>
        <tissue>Venom</tissue>
    </source>
</reference>
<reference key="3">
    <citation type="submission" date="2002-10" db="UniProtKB">
        <title>Function and solution structure of hainantoxin-III, a potent neuronal TTX-sensitive sodium channel antagonist from Chinese bird spider Selenocosmia hainana.</title>
        <authorList>
            <person name="Zhu Q."/>
            <person name="Liu Z.-H."/>
            <person name="Liang S.-P."/>
        </authorList>
    </citation>
    <scope>SUBUNIT</scope>
    <scope>MASS SPECTROMETRY</scope>
</reference>
<reference key="4">
    <citation type="journal article" date="2013" name="J. Biol. Chem.">
        <title>Structure and function of hainantoxin-III, a selective antagonist of neuronal tetrodotoxin-sensitive voltage-gated sodium channels isolated from the Chinese bird spider Ornithoctonus hainana.</title>
        <authorList>
            <person name="Liu Z."/>
            <person name="Cai T."/>
            <person name="Zhu Q."/>
            <person name="Deng M."/>
            <person name="Li J."/>
            <person name="Zhou X."/>
            <person name="Zhang F."/>
            <person name="Li D."/>
            <person name="Li J."/>
            <person name="Liu Y."/>
            <person name="Hu W."/>
            <person name="Liang S."/>
        </authorList>
    </citation>
    <scope>FUNCTION</scope>
    <scope>SUBCELLULAR LOCATION</scope>
    <scope>STRUCTURE BY NMR OF 49-81</scope>
    <scope>DISULFIDE BONDS</scope>
    <source>
        <tissue>Venom</tissue>
    </source>
</reference>
<reference key="5">
    <citation type="submission" date="2007-07" db="PDB data bank">
        <title>Three dimensional solution structure of hainantoxin-III by 2D 1H-NMR.</title>
        <authorList>
            <person name="Zhu Q."/>
            <person name="Liu Z."/>
            <person name="Liang S."/>
        </authorList>
    </citation>
    <scope>STRUCTURE BY NMR OF 49-81</scope>
    <scope>DISULFIDE BONDS</scope>
</reference>
<comment type="function">
    <text evidence="4">Selective antagonist of neuronal tetrodotoxin (TTX)-sensitive voltage-gated sodium channels (IC(50)=1270 nM on Nav1.1/SCN1A, 270 nM on Nav1.2/SCN2A, 491 nM on Nav1.3/SCN3A and 232 nM on Nav1.7/SCN9A). This toxin suppress Nav1.7 current amplitude without significantly altering the activation, inactivation, and repriming kinetics. Short extreme depolarizations partially activate the toxin-bound channel, indicating voltage-dependent inhibition of this toxin. This toxin increases the deactivation of the Nav1.7 current after extreme depolarizations. The toxin-Nav1.7 complex is gradually dissociated upon prolonged strong depolarizations in a voltage-dependent manner, and the unbound toxin rebinds to Nav1.7 after a long repolarization. Moreover, analysis of chimeric channels showed that the DIIS3-S4 linker is critical for toxin binding to Nav1.7. These data are consistent with this toxin interacting with Nav1.7 site 4 and trapping the domain II voltage sensor in the closed state.</text>
</comment>
<comment type="subunit">
    <text evidence="5">Monomer.</text>
</comment>
<comment type="subcellular location">
    <subcellularLocation>
        <location evidence="2 4">Secreted</location>
    </subcellularLocation>
</comment>
<comment type="tissue specificity">
    <text evidence="10 11">Expressed by the venom gland.</text>
</comment>
<comment type="domain">
    <text evidence="4">The presence of a 'disulfide through disulfide knot' structurally defines this protein as a knottin.</text>
</comment>
<comment type="mass spectrometry" mass="3607.6" method="Electrospray" evidence="5"/>
<comment type="miscellaneous">
    <text evidence="2 4">Negative results: has no activity on Nav1.4, Nav1.5, Nav1.8 and Nav1.9 sodium and calcium currents.</text>
</comment>
<comment type="similarity">
    <text evidence="9">Belongs to the neurotoxin 10 (Hwtx-1) family. 15 (Hntx-3) subfamily.</text>
</comment>
<comment type="caution">
    <text evidence="9">Several genes are coding for this toxin for which the structure by NMR has been determined. The cross-references to PDB and additional information can be found in entry AC D2Y1X9.</text>
</comment>
<keyword id="KW-0027">Amidation</keyword>
<keyword id="KW-0903">Direct protein sequencing</keyword>
<keyword id="KW-1015">Disulfide bond</keyword>
<keyword id="KW-0872">Ion channel impairing toxin</keyword>
<keyword id="KW-0960">Knottin</keyword>
<keyword id="KW-0528">Neurotoxin</keyword>
<keyword id="KW-0638">Presynaptic neurotoxin</keyword>
<keyword id="KW-0964">Secreted</keyword>
<keyword id="KW-0732">Signal</keyword>
<keyword id="KW-0800">Toxin</keyword>
<keyword id="KW-0738">Voltage-gated sodium channel impairing toxin</keyword>
<accession>D2Y2I3</accession>
<accession>P83464</accession>
<feature type="signal peptide" evidence="1">
    <location>
        <begin position="1"/>
        <end position="21"/>
    </location>
</feature>
<feature type="propeptide" id="PRO_0000400526" evidence="2 3">
    <location>
        <begin position="22"/>
        <end position="48"/>
    </location>
</feature>
<feature type="peptide" id="PRO_0000400527" description="Hainantoxin-III 12">
    <location>
        <begin position="49"/>
        <end position="81"/>
    </location>
</feature>
<feature type="modified residue" description="Leucine amide" evidence="2">
    <location>
        <position position="81"/>
    </location>
</feature>
<feature type="disulfide bond" evidence="4 6">
    <location>
        <begin position="50"/>
        <end position="65"/>
    </location>
</feature>
<feature type="disulfide bond" evidence="4 6">
    <location>
        <begin position="57"/>
        <end position="70"/>
    </location>
</feature>
<feature type="disulfide bond" evidence="4 6">
    <location>
        <begin position="64"/>
        <end position="77"/>
    </location>
</feature>
<proteinExistence type="evidence at protein level"/>
<organism>
    <name type="scientific">Cyriopagopus hainanus</name>
    <name type="common">Chinese bird spider</name>
    <name type="synonym">Haplopelma hainanum</name>
    <dbReference type="NCBI Taxonomy" id="209901"/>
    <lineage>
        <taxon>Eukaryota</taxon>
        <taxon>Metazoa</taxon>
        <taxon>Ecdysozoa</taxon>
        <taxon>Arthropoda</taxon>
        <taxon>Chelicerata</taxon>
        <taxon>Arachnida</taxon>
        <taxon>Araneae</taxon>
        <taxon>Mygalomorphae</taxon>
        <taxon>Theraphosidae</taxon>
        <taxon>Haplopelma</taxon>
    </lineage>
</organism>
<dbReference type="EMBL" id="GU293060">
    <property type="protein sequence ID" value="ADB56876.1"/>
    <property type="molecule type" value="Genomic_DNA"/>
</dbReference>
<dbReference type="SMR" id="D2Y2I3"/>
<dbReference type="ArachnoServer" id="AS000339">
    <property type="toxin name" value="mu-theraphotoxin-Hhn2a"/>
</dbReference>
<dbReference type="GO" id="GO:0005576">
    <property type="term" value="C:extracellular region"/>
    <property type="evidence" value="ECO:0007669"/>
    <property type="project" value="UniProtKB-SubCell"/>
</dbReference>
<dbReference type="GO" id="GO:0044231">
    <property type="term" value="C:host cell presynaptic membrane"/>
    <property type="evidence" value="ECO:0007669"/>
    <property type="project" value="UniProtKB-KW"/>
</dbReference>
<dbReference type="GO" id="GO:0008200">
    <property type="term" value="F:ion channel inhibitor activity"/>
    <property type="evidence" value="ECO:0007669"/>
    <property type="project" value="InterPro"/>
</dbReference>
<dbReference type="GO" id="GO:0017080">
    <property type="term" value="F:sodium channel regulator activity"/>
    <property type="evidence" value="ECO:0007669"/>
    <property type="project" value="UniProtKB-KW"/>
</dbReference>
<dbReference type="GO" id="GO:0090729">
    <property type="term" value="F:toxin activity"/>
    <property type="evidence" value="ECO:0007669"/>
    <property type="project" value="UniProtKB-KW"/>
</dbReference>
<dbReference type="InterPro" id="IPR011696">
    <property type="entry name" value="Huwentoxin-1"/>
</dbReference>
<dbReference type="InterPro" id="IPR013140">
    <property type="entry name" value="Huwentoxin_CS1"/>
</dbReference>
<dbReference type="Pfam" id="PF07740">
    <property type="entry name" value="Toxin_12"/>
    <property type="match status" value="1"/>
</dbReference>
<dbReference type="SUPFAM" id="SSF57059">
    <property type="entry name" value="omega toxin-like"/>
    <property type="match status" value="1"/>
</dbReference>
<dbReference type="PROSITE" id="PS60021">
    <property type="entry name" value="HWTX_1"/>
    <property type="match status" value="1"/>
</dbReference>